<feature type="chain" id="PRO_1000115467" description="ATP-dependent Clp protease adapter protein ClpS">
    <location>
        <begin position="1"/>
        <end position="120"/>
    </location>
</feature>
<feature type="region of interest" description="Disordered" evidence="2">
    <location>
        <begin position="1"/>
        <end position="25"/>
    </location>
</feature>
<evidence type="ECO:0000255" key="1">
    <source>
        <dbReference type="HAMAP-Rule" id="MF_00302"/>
    </source>
</evidence>
<evidence type="ECO:0000256" key="2">
    <source>
        <dbReference type="SAM" id="MobiDB-lite"/>
    </source>
</evidence>
<dbReference type="EMBL" id="CP000949">
    <property type="protein sequence ID" value="ACA73897.1"/>
    <property type="molecule type" value="Genomic_DNA"/>
</dbReference>
<dbReference type="SMR" id="B1JBE9"/>
<dbReference type="STRING" id="390235.PputW619_3413"/>
<dbReference type="KEGG" id="ppw:PputW619_3413"/>
<dbReference type="eggNOG" id="COG2127">
    <property type="taxonomic scope" value="Bacteria"/>
</dbReference>
<dbReference type="HOGENOM" id="CLU_134358_2_0_6"/>
<dbReference type="OrthoDB" id="9796121at2"/>
<dbReference type="GO" id="GO:0030163">
    <property type="term" value="P:protein catabolic process"/>
    <property type="evidence" value="ECO:0007669"/>
    <property type="project" value="InterPro"/>
</dbReference>
<dbReference type="GO" id="GO:0006508">
    <property type="term" value="P:proteolysis"/>
    <property type="evidence" value="ECO:0007669"/>
    <property type="project" value="UniProtKB-UniRule"/>
</dbReference>
<dbReference type="FunFam" id="3.30.1390.10:FF:000002">
    <property type="entry name" value="ATP-dependent Clp protease adapter protein ClpS"/>
    <property type="match status" value="1"/>
</dbReference>
<dbReference type="Gene3D" id="3.30.1390.10">
    <property type="match status" value="1"/>
</dbReference>
<dbReference type="HAMAP" id="MF_00302">
    <property type="entry name" value="ClpS"/>
    <property type="match status" value="1"/>
</dbReference>
<dbReference type="InterPro" id="IPR022935">
    <property type="entry name" value="ClpS"/>
</dbReference>
<dbReference type="InterPro" id="IPR003769">
    <property type="entry name" value="ClpS_core"/>
</dbReference>
<dbReference type="InterPro" id="IPR014719">
    <property type="entry name" value="Ribosomal_bL12_C/ClpS-like"/>
</dbReference>
<dbReference type="NCBIfam" id="NF000669">
    <property type="entry name" value="PRK00033.1-2"/>
    <property type="match status" value="1"/>
</dbReference>
<dbReference type="NCBIfam" id="NF000672">
    <property type="entry name" value="PRK00033.1-5"/>
    <property type="match status" value="1"/>
</dbReference>
<dbReference type="PANTHER" id="PTHR33473:SF19">
    <property type="entry name" value="ATP-DEPENDENT CLP PROTEASE ADAPTER PROTEIN CLPS"/>
    <property type="match status" value="1"/>
</dbReference>
<dbReference type="PANTHER" id="PTHR33473">
    <property type="entry name" value="ATP-DEPENDENT CLP PROTEASE ADAPTER PROTEIN CLPS1, CHLOROPLASTIC"/>
    <property type="match status" value="1"/>
</dbReference>
<dbReference type="Pfam" id="PF02617">
    <property type="entry name" value="ClpS"/>
    <property type="match status" value="1"/>
</dbReference>
<dbReference type="SUPFAM" id="SSF54736">
    <property type="entry name" value="ClpS-like"/>
    <property type="match status" value="1"/>
</dbReference>
<organism>
    <name type="scientific">Pseudomonas putida (strain W619)</name>
    <dbReference type="NCBI Taxonomy" id="390235"/>
    <lineage>
        <taxon>Bacteria</taxon>
        <taxon>Pseudomonadati</taxon>
        <taxon>Pseudomonadota</taxon>
        <taxon>Gammaproteobacteria</taxon>
        <taxon>Pseudomonadales</taxon>
        <taxon>Pseudomonadaceae</taxon>
        <taxon>Pseudomonas</taxon>
    </lineage>
</organism>
<comment type="function">
    <text evidence="1">Involved in the modulation of the specificity of the ClpAP-mediated ATP-dependent protein degradation.</text>
</comment>
<comment type="subunit">
    <text evidence="1">Binds to the N-terminal domain of the chaperone ClpA.</text>
</comment>
<comment type="similarity">
    <text evidence="1">Belongs to the ClpS family.</text>
</comment>
<proteinExistence type="inferred from homology"/>
<name>CLPS_PSEPW</name>
<accession>B1JBE9</accession>
<gene>
    <name evidence="1" type="primary">clpS</name>
    <name type="ordered locus">PputW619_3413</name>
</gene>
<sequence length="120" mass="13662">MHARSEIRLTFNQDRPQSNEDDGSGLAVQEAKPILQAPPMYKVVLFNDDYTPMDFVVEVLETFFSLNRELATKIMLTVHTEGRAVCGLFTRDIAETKAMQVNQYARESQHPLLCEIEKDG</sequence>
<reference key="1">
    <citation type="submission" date="2008-02" db="EMBL/GenBank/DDBJ databases">
        <title>Complete sequence of Pseudomonas putida W619.</title>
        <authorList>
            <person name="Copeland A."/>
            <person name="Lucas S."/>
            <person name="Lapidus A."/>
            <person name="Barry K."/>
            <person name="Detter J.C."/>
            <person name="Glavina del Rio T."/>
            <person name="Dalin E."/>
            <person name="Tice H."/>
            <person name="Pitluck S."/>
            <person name="Chain P."/>
            <person name="Malfatti S."/>
            <person name="Shin M."/>
            <person name="Vergez L."/>
            <person name="Schmutz J."/>
            <person name="Larimer F."/>
            <person name="Land M."/>
            <person name="Hauser L."/>
            <person name="Kyrpides N."/>
            <person name="Kim E."/>
            <person name="Taghavi S."/>
            <person name="Vangronsveld D."/>
            <person name="van der Lelie D."/>
            <person name="Richardson P."/>
        </authorList>
    </citation>
    <scope>NUCLEOTIDE SEQUENCE [LARGE SCALE GENOMIC DNA]</scope>
    <source>
        <strain>W619</strain>
    </source>
</reference>
<protein>
    <recommendedName>
        <fullName evidence="1">ATP-dependent Clp protease adapter protein ClpS</fullName>
    </recommendedName>
</protein>